<feature type="chain" id="PRO_1000095009" description="33 kDa chaperonin">
    <location>
        <begin position="1"/>
        <end position="291"/>
    </location>
</feature>
<feature type="disulfide bond" description="Redox-active" evidence="1">
    <location>
        <begin position="229"/>
        <end position="231"/>
    </location>
</feature>
<feature type="disulfide bond" description="Redox-active" evidence="1">
    <location>
        <begin position="262"/>
        <end position="265"/>
    </location>
</feature>
<keyword id="KW-0143">Chaperone</keyword>
<keyword id="KW-0963">Cytoplasm</keyword>
<keyword id="KW-1015">Disulfide bond</keyword>
<keyword id="KW-0676">Redox-active center</keyword>
<keyword id="KW-0346">Stress response</keyword>
<keyword id="KW-0862">Zinc</keyword>
<name>HSLO_ALISL</name>
<accession>B6EGP6</accession>
<sequence>MANNTLHRYLFEDLSVRGELVQLDDAYQQIISSKEYPKPVQNLLGELLVATTLLTATLKFEGSITLQLQGNGPVSLVVINGDNDQKVRGVARFEGEIADDATLHQLMGKGYLVITISPKDGERYQGVVALEGKDLAECFEGYFERSEQLKTRLWLRLGEFEGKPHAAGMLLQVMPDGTGSSDDFEHLEQLTDTVKNEELFSLEAEDVLYRLYNQDKVQLFEPQNVEFFCGCSRERSGGAIITIERSEVDDIIATEGKVSLHCDYCGTSYDFDSIDVAHLFEEATKGNDTVH</sequence>
<proteinExistence type="inferred from homology"/>
<evidence type="ECO:0000255" key="1">
    <source>
        <dbReference type="HAMAP-Rule" id="MF_00117"/>
    </source>
</evidence>
<reference key="1">
    <citation type="journal article" date="2008" name="BMC Genomics">
        <title>The genome sequence of the fish pathogen Aliivibrio salmonicida strain LFI1238 shows extensive evidence of gene decay.</title>
        <authorList>
            <person name="Hjerde E."/>
            <person name="Lorentzen M.S."/>
            <person name="Holden M.T."/>
            <person name="Seeger K."/>
            <person name="Paulsen S."/>
            <person name="Bason N."/>
            <person name="Churcher C."/>
            <person name="Harris D."/>
            <person name="Norbertczak H."/>
            <person name="Quail M.A."/>
            <person name="Sanders S."/>
            <person name="Thurston S."/>
            <person name="Parkhill J."/>
            <person name="Willassen N.P."/>
            <person name="Thomson N.R."/>
        </authorList>
    </citation>
    <scope>NUCLEOTIDE SEQUENCE [LARGE SCALE GENOMIC DNA]</scope>
    <source>
        <strain>LFI1238</strain>
    </source>
</reference>
<gene>
    <name evidence="1" type="primary">hslO</name>
    <name type="ordered locus">VSAL_I2927</name>
</gene>
<protein>
    <recommendedName>
        <fullName evidence="1">33 kDa chaperonin</fullName>
    </recommendedName>
    <alternativeName>
        <fullName evidence="1">Heat shock protein 33 homolog</fullName>
        <shortName evidence="1">HSP33</shortName>
    </alternativeName>
</protein>
<organism>
    <name type="scientific">Aliivibrio salmonicida (strain LFI1238)</name>
    <name type="common">Vibrio salmonicida (strain LFI1238)</name>
    <dbReference type="NCBI Taxonomy" id="316275"/>
    <lineage>
        <taxon>Bacteria</taxon>
        <taxon>Pseudomonadati</taxon>
        <taxon>Pseudomonadota</taxon>
        <taxon>Gammaproteobacteria</taxon>
        <taxon>Vibrionales</taxon>
        <taxon>Vibrionaceae</taxon>
        <taxon>Aliivibrio</taxon>
    </lineage>
</organism>
<dbReference type="EMBL" id="FM178379">
    <property type="protein sequence ID" value="CAQ80611.1"/>
    <property type="molecule type" value="Genomic_DNA"/>
</dbReference>
<dbReference type="RefSeq" id="WP_012551344.1">
    <property type="nucleotide sequence ID" value="NC_011312.1"/>
</dbReference>
<dbReference type="SMR" id="B6EGP6"/>
<dbReference type="KEGG" id="vsa:VSAL_I2927"/>
<dbReference type="eggNOG" id="COG1281">
    <property type="taxonomic scope" value="Bacteria"/>
</dbReference>
<dbReference type="HOGENOM" id="CLU_054493_0_0_6"/>
<dbReference type="Proteomes" id="UP000001730">
    <property type="component" value="Chromosome 1"/>
</dbReference>
<dbReference type="GO" id="GO:0005737">
    <property type="term" value="C:cytoplasm"/>
    <property type="evidence" value="ECO:0007669"/>
    <property type="project" value="UniProtKB-SubCell"/>
</dbReference>
<dbReference type="GO" id="GO:0044183">
    <property type="term" value="F:protein folding chaperone"/>
    <property type="evidence" value="ECO:0007669"/>
    <property type="project" value="TreeGrafter"/>
</dbReference>
<dbReference type="GO" id="GO:0051082">
    <property type="term" value="F:unfolded protein binding"/>
    <property type="evidence" value="ECO:0007669"/>
    <property type="project" value="UniProtKB-UniRule"/>
</dbReference>
<dbReference type="GO" id="GO:0042026">
    <property type="term" value="P:protein refolding"/>
    <property type="evidence" value="ECO:0007669"/>
    <property type="project" value="TreeGrafter"/>
</dbReference>
<dbReference type="CDD" id="cd00498">
    <property type="entry name" value="Hsp33"/>
    <property type="match status" value="1"/>
</dbReference>
<dbReference type="Gene3D" id="1.10.287.480">
    <property type="entry name" value="helix hairpin bin"/>
    <property type="match status" value="1"/>
</dbReference>
<dbReference type="Gene3D" id="3.55.30.10">
    <property type="entry name" value="Hsp33 domain"/>
    <property type="match status" value="1"/>
</dbReference>
<dbReference type="Gene3D" id="3.90.1280.10">
    <property type="entry name" value="HSP33 redox switch-like"/>
    <property type="match status" value="1"/>
</dbReference>
<dbReference type="HAMAP" id="MF_00117">
    <property type="entry name" value="HslO"/>
    <property type="match status" value="1"/>
</dbReference>
<dbReference type="InterPro" id="IPR000397">
    <property type="entry name" value="Heat_shock_Hsp33"/>
</dbReference>
<dbReference type="InterPro" id="IPR016154">
    <property type="entry name" value="Heat_shock_Hsp33_C"/>
</dbReference>
<dbReference type="InterPro" id="IPR016153">
    <property type="entry name" value="Heat_shock_Hsp33_N"/>
</dbReference>
<dbReference type="InterPro" id="IPR023212">
    <property type="entry name" value="Hsp33_helix_hairpin_bin_dom_sf"/>
</dbReference>
<dbReference type="NCBIfam" id="NF001033">
    <property type="entry name" value="PRK00114.1"/>
    <property type="match status" value="1"/>
</dbReference>
<dbReference type="PANTHER" id="PTHR30111">
    <property type="entry name" value="33 KDA CHAPERONIN"/>
    <property type="match status" value="1"/>
</dbReference>
<dbReference type="PANTHER" id="PTHR30111:SF1">
    <property type="entry name" value="33 KDA CHAPERONIN"/>
    <property type="match status" value="1"/>
</dbReference>
<dbReference type="Pfam" id="PF01430">
    <property type="entry name" value="HSP33"/>
    <property type="match status" value="1"/>
</dbReference>
<dbReference type="PIRSF" id="PIRSF005261">
    <property type="entry name" value="Heat_shock_Hsp33"/>
    <property type="match status" value="1"/>
</dbReference>
<dbReference type="SUPFAM" id="SSF64397">
    <property type="entry name" value="Hsp33 domain"/>
    <property type="match status" value="1"/>
</dbReference>
<dbReference type="SUPFAM" id="SSF118352">
    <property type="entry name" value="HSP33 redox switch-like"/>
    <property type="match status" value="1"/>
</dbReference>
<comment type="function">
    <text evidence="1">Redox regulated molecular chaperone. Protects both thermally unfolding and oxidatively damaged proteins from irreversible aggregation. Plays an important role in the bacterial defense system toward oxidative stress.</text>
</comment>
<comment type="subcellular location">
    <subcellularLocation>
        <location evidence="1">Cytoplasm</location>
    </subcellularLocation>
</comment>
<comment type="PTM">
    <text evidence="1">Under oxidizing conditions two disulfide bonds are formed involving the reactive cysteines. Under reducing conditions zinc is bound to the reactive cysteines and the protein is inactive.</text>
</comment>
<comment type="similarity">
    <text evidence="1">Belongs to the HSP33 family.</text>
</comment>